<evidence type="ECO:0000255" key="1">
    <source>
        <dbReference type="HAMAP-Rule" id="MF_01043"/>
    </source>
</evidence>
<reference key="1">
    <citation type="journal article" date="2006" name="J. Bacteriol.">
        <title>Pathogenomic sequence analysis of Bacillus cereus and Bacillus thuringiensis isolates closely related to Bacillus anthracis.</title>
        <authorList>
            <person name="Han C.S."/>
            <person name="Xie G."/>
            <person name="Challacombe J.F."/>
            <person name="Altherr M.R."/>
            <person name="Bhotika S.S."/>
            <person name="Bruce D."/>
            <person name="Campbell C.S."/>
            <person name="Campbell M.L."/>
            <person name="Chen J."/>
            <person name="Chertkov O."/>
            <person name="Cleland C."/>
            <person name="Dimitrijevic M."/>
            <person name="Doggett N.A."/>
            <person name="Fawcett J.J."/>
            <person name="Glavina T."/>
            <person name="Goodwin L.A."/>
            <person name="Hill K.K."/>
            <person name="Hitchcock P."/>
            <person name="Jackson P.J."/>
            <person name="Keim P."/>
            <person name="Kewalramani A.R."/>
            <person name="Longmire J."/>
            <person name="Lucas S."/>
            <person name="Malfatti S."/>
            <person name="McMurry K."/>
            <person name="Meincke L.J."/>
            <person name="Misra M."/>
            <person name="Moseman B.L."/>
            <person name="Mundt M."/>
            <person name="Munk A.C."/>
            <person name="Okinaka R.T."/>
            <person name="Parson-Quintana B."/>
            <person name="Reilly L.P."/>
            <person name="Richardson P."/>
            <person name="Robinson D.L."/>
            <person name="Rubin E."/>
            <person name="Saunders E."/>
            <person name="Tapia R."/>
            <person name="Tesmer J.G."/>
            <person name="Thayer N."/>
            <person name="Thompson L.S."/>
            <person name="Tice H."/>
            <person name="Ticknor L.O."/>
            <person name="Wills P.L."/>
            <person name="Brettin T.S."/>
            <person name="Gilna P."/>
        </authorList>
    </citation>
    <scope>NUCLEOTIDE SEQUENCE [LARGE SCALE GENOMIC DNA]</scope>
    <source>
        <strain>ZK / E33L</strain>
    </source>
</reference>
<accession>Q637M1</accession>
<comment type="function">
    <text evidence="1">Catalyzes the transfer of an acyl group from acyl-phosphate (acyl-PO(4)) to glycerol-3-phosphate (G3P) to form lysophosphatidic acid (LPA). This enzyme utilizes acyl-phosphate as fatty acyl donor, but not acyl-CoA or acyl-ACP.</text>
</comment>
<comment type="catalytic activity">
    <reaction evidence="1">
        <text>an acyl phosphate + sn-glycerol 3-phosphate = a 1-acyl-sn-glycero-3-phosphate + phosphate</text>
        <dbReference type="Rhea" id="RHEA:34075"/>
        <dbReference type="ChEBI" id="CHEBI:43474"/>
        <dbReference type="ChEBI" id="CHEBI:57597"/>
        <dbReference type="ChEBI" id="CHEBI:57970"/>
        <dbReference type="ChEBI" id="CHEBI:59918"/>
        <dbReference type="EC" id="2.3.1.275"/>
    </reaction>
</comment>
<comment type="pathway">
    <text evidence="1">Lipid metabolism; phospholipid metabolism.</text>
</comment>
<comment type="subunit">
    <text evidence="1">Probably interacts with PlsX.</text>
</comment>
<comment type="subcellular location">
    <subcellularLocation>
        <location evidence="1">Cell membrane</location>
        <topology evidence="1">Multi-pass membrane protein</topology>
    </subcellularLocation>
</comment>
<comment type="similarity">
    <text evidence="1">Belongs to the PlsY family.</text>
</comment>
<sequence>MVTTYLLFIVAYLLGSIPFALVVGKIGYGIDIREHGSGNLGGTNTFRTLGKKAGFIVTIADILKGTLATSLPMVFGLDIHPLWFGLAAVLGHVYPIFAKFRGGKAVATSAGVLLCYSPVVFAILAVVFFTLLFTTRYVSLSSMVTAVVAVIASIVSGDKIFIIAMCLLAGMVIYKHRANIGRIINKTEPKANFSKKQK</sequence>
<proteinExistence type="inferred from homology"/>
<dbReference type="EC" id="2.3.1.275" evidence="1"/>
<dbReference type="EMBL" id="CP000001">
    <property type="protein sequence ID" value="AAU16952.1"/>
    <property type="molecule type" value="Genomic_DNA"/>
</dbReference>
<dbReference type="RefSeq" id="WP_000258969.1">
    <property type="nucleotide sequence ID" value="NC_006274.1"/>
</dbReference>
<dbReference type="SMR" id="Q637M1"/>
<dbReference type="KEGG" id="bcz:BCE33L3311"/>
<dbReference type="PATRIC" id="fig|288681.22.peg.2116"/>
<dbReference type="UniPathway" id="UPA00085"/>
<dbReference type="Proteomes" id="UP000002612">
    <property type="component" value="Chromosome"/>
</dbReference>
<dbReference type="GO" id="GO:0005886">
    <property type="term" value="C:plasma membrane"/>
    <property type="evidence" value="ECO:0007669"/>
    <property type="project" value="UniProtKB-SubCell"/>
</dbReference>
<dbReference type="GO" id="GO:0043772">
    <property type="term" value="F:acyl-phosphate glycerol-3-phosphate acyltransferase activity"/>
    <property type="evidence" value="ECO:0007669"/>
    <property type="project" value="UniProtKB-UniRule"/>
</dbReference>
<dbReference type="GO" id="GO:0008654">
    <property type="term" value="P:phospholipid biosynthetic process"/>
    <property type="evidence" value="ECO:0007669"/>
    <property type="project" value="UniProtKB-UniRule"/>
</dbReference>
<dbReference type="HAMAP" id="MF_01043">
    <property type="entry name" value="PlsY"/>
    <property type="match status" value="1"/>
</dbReference>
<dbReference type="InterPro" id="IPR003811">
    <property type="entry name" value="G3P_acylTferase_PlsY"/>
</dbReference>
<dbReference type="NCBIfam" id="TIGR00023">
    <property type="entry name" value="glycerol-3-phosphate 1-O-acyltransferase PlsY"/>
    <property type="match status" value="1"/>
</dbReference>
<dbReference type="PANTHER" id="PTHR30309:SF0">
    <property type="entry name" value="GLYCEROL-3-PHOSPHATE ACYLTRANSFERASE-RELATED"/>
    <property type="match status" value="1"/>
</dbReference>
<dbReference type="PANTHER" id="PTHR30309">
    <property type="entry name" value="INNER MEMBRANE PROTEIN YGIH"/>
    <property type="match status" value="1"/>
</dbReference>
<dbReference type="Pfam" id="PF02660">
    <property type="entry name" value="G3P_acyltransf"/>
    <property type="match status" value="1"/>
</dbReference>
<dbReference type="SMART" id="SM01207">
    <property type="entry name" value="G3P_acyltransf"/>
    <property type="match status" value="1"/>
</dbReference>
<gene>
    <name evidence="1" type="primary">plsY2</name>
    <name type="ordered locus">BCE33L3311</name>
</gene>
<feature type="chain" id="PRO_0000188322" description="Glycerol-3-phosphate acyltransferase 2">
    <location>
        <begin position="1"/>
        <end position="198"/>
    </location>
</feature>
<feature type="transmembrane region" description="Helical" evidence="1">
    <location>
        <begin position="4"/>
        <end position="24"/>
    </location>
</feature>
<feature type="transmembrane region" description="Helical" evidence="1">
    <location>
        <begin position="71"/>
        <end position="91"/>
    </location>
</feature>
<feature type="transmembrane region" description="Helical" evidence="1">
    <location>
        <begin position="113"/>
        <end position="133"/>
    </location>
</feature>
<feature type="transmembrane region" description="Helical" evidence="1">
    <location>
        <begin position="147"/>
        <end position="167"/>
    </location>
</feature>
<organism>
    <name type="scientific">Bacillus cereus (strain ZK / E33L)</name>
    <dbReference type="NCBI Taxonomy" id="288681"/>
    <lineage>
        <taxon>Bacteria</taxon>
        <taxon>Bacillati</taxon>
        <taxon>Bacillota</taxon>
        <taxon>Bacilli</taxon>
        <taxon>Bacillales</taxon>
        <taxon>Bacillaceae</taxon>
        <taxon>Bacillus</taxon>
        <taxon>Bacillus cereus group</taxon>
    </lineage>
</organism>
<name>PLSY2_BACCZ</name>
<protein>
    <recommendedName>
        <fullName evidence="1">Glycerol-3-phosphate acyltransferase 2</fullName>
    </recommendedName>
    <alternativeName>
        <fullName evidence="1">Acyl-PO4 G3P acyltransferase 2</fullName>
    </alternativeName>
    <alternativeName>
        <fullName evidence="1">Acyl-phosphate--glycerol-3-phosphate acyltransferase 2</fullName>
    </alternativeName>
    <alternativeName>
        <fullName evidence="1">G3P acyltransferase 2</fullName>
        <shortName evidence="1">GPAT 2</shortName>
        <ecNumber evidence="1">2.3.1.275</ecNumber>
    </alternativeName>
    <alternativeName>
        <fullName evidence="1">Lysophosphatidic acid synthase 2</fullName>
        <shortName evidence="1">LPA synthase 2</shortName>
    </alternativeName>
</protein>
<keyword id="KW-1003">Cell membrane</keyword>
<keyword id="KW-0444">Lipid biosynthesis</keyword>
<keyword id="KW-0443">Lipid metabolism</keyword>
<keyword id="KW-0472">Membrane</keyword>
<keyword id="KW-0594">Phospholipid biosynthesis</keyword>
<keyword id="KW-1208">Phospholipid metabolism</keyword>
<keyword id="KW-0808">Transferase</keyword>
<keyword id="KW-0812">Transmembrane</keyword>
<keyword id="KW-1133">Transmembrane helix</keyword>